<dbReference type="EC" id="6.2.1.-" evidence="9"/>
<dbReference type="EMBL" id="KU946987">
    <property type="protein sequence ID" value="AMY15066.1"/>
    <property type="molecule type" value="Genomic_DNA"/>
</dbReference>
<dbReference type="SMR" id="A0A3G1DJF8"/>
<dbReference type="GO" id="GO:0005524">
    <property type="term" value="F:ATP binding"/>
    <property type="evidence" value="ECO:0007669"/>
    <property type="project" value="UniProtKB-KW"/>
</dbReference>
<dbReference type="GO" id="GO:0016405">
    <property type="term" value="F:CoA-ligase activity"/>
    <property type="evidence" value="ECO:0007669"/>
    <property type="project" value="TreeGrafter"/>
</dbReference>
<dbReference type="GO" id="GO:0019748">
    <property type="term" value="P:secondary metabolic process"/>
    <property type="evidence" value="ECO:0007669"/>
    <property type="project" value="TreeGrafter"/>
</dbReference>
<dbReference type="Gene3D" id="3.30.300.30">
    <property type="match status" value="1"/>
</dbReference>
<dbReference type="Gene3D" id="3.40.50.12780">
    <property type="entry name" value="N-terminal domain of ligase-like"/>
    <property type="match status" value="1"/>
</dbReference>
<dbReference type="InterPro" id="IPR025110">
    <property type="entry name" value="AMP-bd_C"/>
</dbReference>
<dbReference type="InterPro" id="IPR045851">
    <property type="entry name" value="AMP-bd_C_sf"/>
</dbReference>
<dbReference type="InterPro" id="IPR000873">
    <property type="entry name" value="AMP-dep_synth/lig_dom"/>
</dbReference>
<dbReference type="InterPro" id="IPR042099">
    <property type="entry name" value="ANL_N_sf"/>
</dbReference>
<dbReference type="PANTHER" id="PTHR24096:SF317">
    <property type="entry name" value="ADENYLATE-FORMING ENZYME AFEA"/>
    <property type="match status" value="1"/>
</dbReference>
<dbReference type="PANTHER" id="PTHR24096">
    <property type="entry name" value="LONG-CHAIN-FATTY-ACID--COA LIGASE"/>
    <property type="match status" value="1"/>
</dbReference>
<dbReference type="Pfam" id="PF00501">
    <property type="entry name" value="AMP-binding"/>
    <property type="match status" value="1"/>
</dbReference>
<dbReference type="Pfam" id="PF13193">
    <property type="entry name" value="AMP-binding_C"/>
    <property type="match status" value="1"/>
</dbReference>
<dbReference type="SUPFAM" id="SSF56801">
    <property type="entry name" value="Acetyl-CoA synthetase-like"/>
    <property type="match status" value="1"/>
</dbReference>
<feature type="chain" id="PRO_0000447838" description="Acyl-CoA ligase M9">
    <location>
        <begin position="1"/>
        <end position="541"/>
    </location>
</feature>
<feature type="region of interest" description="AMP-binding" evidence="2">
    <location>
        <begin position="445"/>
        <end position="519"/>
    </location>
</feature>
<feature type="binding site" evidence="2">
    <location>
        <begin position="186"/>
        <end position="197"/>
    </location>
    <ligand>
        <name>AMP</name>
        <dbReference type="ChEBI" id="CHEBI:456215"/>
    </ligand>
</feature>
<gene>
    <name evidence="7" type="primary">M9</name>
</gene>
<organism>
    <name type="scientific">Phoma sp. (strain ATCC 20986 / MF5453)</name>
    <dbReference type="NCBI Taxonomy" id="1828523"/>
    <lineage>
        <taxon>Eukaryota</taxon>
        <taxon>Fungi</taxon>
        <taxon>Dikarya</taxon>
        <taxon>Ascomycota</taxon>
        <taxon>Pezizomycotina</taxon>
        <taxon>Dothideomycetes</taxon>
        <taxon>Pleosporomycetidae</taxon>
        <taxon>Pleosporales</taxon>
        <taxon>Pleosporineae</taxon>
        <taxon>Didymellaceae</taxon>
        <taxon>Phoma</taxon>
    </lineage>
</organism>
<accession>A0A3G1DJF8</accession>
<comment type="function">
    <text evidence="1 3 4 5 6 9">Acyl-CoA ligase; part of the gene cluster that mediates the biosynthesis of squalestatin S1 (SQS1, also known as zaragozic acid A), a heavily oxidized fungal polyketide that offers potent cholesterol lowering activity by targeting squalene synthase (SS) (PubMed:27056201). SQS1 is composed of a 2,8-dioxobicyclic[3.2.1]octane-3,4,5-tricarboxyclic acid core that is connected to two lipophilic polyketide arms (PubMed:27056201). These initial steps feature the priming of an unusual benzoic acid starter unit onto the highly reducing polyketide synthase pks2, followed by oxaloacetate extension and product release to generate a tricarboxylic acid containing product (By similarity). The phenylalanine ammonia lyase (PAL) M7 and the acyl-CoA ligase M9 are involved in transforming phenylalanine into benzoyl-CoA (By similarity). The citrate synthase-like protein R3 is involved in connecting the C-alpha-carbons of the hexaketide chain and oxaloacetate to afford the tricarboxylic acid unit (By similarity). The potential hydrolytic enzymes, M8 and M10, are in close proximity to pks2 and may participate in product release (By similarity). On the other side, the tetraketide arm is synthesized by a the squalestatin tetraketide synthase pks1 and enzymatically esterified to the core in the last biosynthetic step, by the acetyltransferase M4 (PubMed:11251290, PubMed:15489970, PubMed:28106181). The biosynthesis of the tetraketide must involve 3 rounds of chain extension (PubMed:11251290, PubMed:15489970, PubMed:28106181). After the first and second rounds methyl-transfer occurs, and in all rounds of extension the ketoreductase and dehydratase are active (PubMed:11251290, PubMed:15489970, PubMed:28106181). The enoyl reductase and C-MeT of pks1 are not active in the final round of extension (PubMed:11251290, PubMed:15489970, PubMed:28106181). The acetyltransferase M4 appears to have a broad substrate selectivity for its acyl CoA substrate, allowing the in vitro synthesis of novel squalestatins (Probable). The biosynthesis of SQS1 requires several oxidative steps likely performed by oxidoreductases M1, R1 and R2 (Probable). Finally, in support of the identification of the cluster as being responsible for SQS1 production, the cluster contains a gene encoding a putative squalene synthase (SS) R6, suggesting a likely mechanism for self-resistance (Probable).</text>
</comment>
<comment type="pathway">
    <text evidence="9">Secondary metabolite biosynthesis.</text>
</comment>
<comment type="similarity">
    <text evidence="8">Belongs to the ATP-dependent AMP-binding enzyme family.</text>
</comment>
<reference key="1">
    <citation type="journal article" date="2016" name="Chem. Commun. (Camb.)">
        <title>Identification of genes encoding squalestatin S1 biosynthesis and in vitro production of new squalestatin analogues.</title>
        <authorList>
            <person name="Bonsch B."/>
            <person name="Belt V."/>
            <person name="Bartel C."/>
            <person name="Duensing N."/>
            <person name="Koziol M."/>
            <person name="Lazarus C.M."/>
            <person name="Bailey A.M."/>
            <person name="Simpson T.J."/>
            <person name="Cox R.J."/>
        </authorList>
    </citation>
    <scope>NUCLEOTIDE SEQUENCE [GENOMIC DNA]</scope>
    <scope>FUNCTION</scope>
</reference>
<reference key="2">
    <citation type="journal article" date="2001" name="Chem. Biol.">
        <title>Design and utility of oligonucleotide gene probes for fungal polyketide synthases.</title>
        <authorList>
            <person name="Nicholson T.P."/>
            <person name="Rudd B.A."/>
            <person name="Dawson M."/>
            <person name="Lazarus C.M."/>
            <person name="Simpson T.J."/>
            <person name="Cox R.J."/>
        </authorList>
    </citation>
    <scope>FUNCTION</scope>
</reference>
<reference key="3">
    <citation type="journal article" date="2004" name="Chem. Commun. (Camb.)">
        <title>Rapid cloning and expression of a fungal polyketide synthase gene involved in squalestatin biosynthesis.</title>
        <authorList>
            <person name="Cox R.J."/>
            <person name="Glod F."/>
            <person name="Hurley D."/>
            <person name="Lazarus C.M."/>
            <person name="Nicholson T.P."/>
            <person name="Rudd B.A."/>
            <person name="Simpson T.J."/>
            <person name="Wilkinson B."/>
            <person name="Zhang Y."/>
        </authorList>
    </citation>
    <scope>FUNCTION</scope>
</reference>
<reference key="4">
    <citation type="journal article" date="2017" name="Chem. Commun. (Camb.)">
        <title>In vitro kinetic study of the squalestatin tetraketide synthase dehydratase reveals the stereochemical course of a fungal highly reducing polyketide synthase.</title>
        <authorList>
            <person name="Liddle E."/>
            <person name="Scott A."/>
            <person name="Han L.C."/>
            <person name="Ivison D."/>
            <person name="Simpson T.J."/>
            <person name="Willis C.L."/>
            <person name="Cox R.J."/>
        </authorList>
    </citation>
    <scope>FUNCTION</scope>
</reference>
<protein>
    <recommendedName>
        <fullName evidence="7">Acyl-CoA ligase M9</fullName>
        <ecNumber evidence="9">6.2.1.-</ecNumber>
    </recommendedName>
    <alternativeName>
        <fullName evidence="7">Squalestatin S1 biosynthesis cluster protein M9</fullName>
    </alternativeName>
</protein>
<name>MFM9_PHOSM</name>
<keyword id="KW-0067">ATP-binding</keyword>
<keyword id="KW-0436">Ligase</keyword>
<keyword id="KW-0547">Nucleotide-binding</keyword>
<evidence type="ECO:0000250" key="1">
    <source>
        <dbReference type="UniProtKB" id="A0A345BJN3"/>
    </source>
</evidence>
<evidence type="ECO:0000255" key="2"/>
<evidence type="ECO:0000269" key="3">
    <source>
    </source>
</evidence>
<evidence type="ECO:0000269" key="4">
    <source>
    </source>
</evidence>
<evidence type="ECO:0000269" key="5">
    <source>
    </source>
</evidence>
<evidence type="ECO:0000269" key="6">
    <source>
    </source>
</evidence>
<evidence type="ECO:0000303" key="7">
    <source>
    </source>
</evidence>
<evidence type="ECO:0000305" key="8"/>
<evidence type="ECO:0000305" key="9">
    <source>
    </source>
</evidence>
<sequence length="541" mass="60243">MADSPLEQGWNVVTWALSGSYDEDRPVLIDADQPNRSLSKKQAIDLVARLSGSFQPGSTVCVHLYNDIIYPVLVLAILASHCEWTGTNPAYTSAELSHHFAQSETRYVITDQAYVDVVHQAITASGQNIEIIIFSDIVTDKPGENDLRWRCNKYDLATLHSLLTHGDESTLRRRLQGIPNHSPATAMSTSGTTGLPKMVQRSHRSLVLETGGTQDHNSAKPFQVRRLYCTPIFHAFSFPEMVINTIRLGFPSFYMRRFDESFANKVHEFGITETMAAPAMLLKIIQWTEKHEEQRFKLQGLRTILCAGAALASRLRASFLQLFDDASVRIVQVWGMTEGGWFATFWYPEHDDTGSIGRPLPTCQIRVSEVPHAELPDGRQVGELLVKGPQLLTTYKGHPDATKQAFNDGWLRTGDIGYCANGKVYIIDRAKDIIKVNGWTISPAELEAVLHQMPVIVDAAALSYGTGTKEHVAMFVVAKEPSMLIADIKHHLLQQVARFKVATCEIHLVDSLPRNSSGKILRGVLRHQLQAHYGNGDHGID</sequence>
<proteinExistence type="inferred from homology"/>